<comment type="function">
    <text evidence="1">Arylphorin is a larval storage protein (LSP) which may serve as a storage protein used primarily as a source of aromatic amino acids for protein synthesis during metamorphosis. It is a constituent of the sclerotizing system of the cuticle, and serves as a carrier for ecdysteroid hormone (By similarity).</text>
</comment>
<comment type="subunit">
    <text evidence="3">Homohexamer of two stacked trimers; disulfide-linked.</text>
</comment>
<comment type="subcellular location">
    <subcellularLocation>
        <location evidence="1">Secreted</location>
        <location evidence="1">Extracellular space</location>
    </subcellularLocation>
</comment>
<comment type="PTM">
    <text evidence="3 4">Glycosylation at Asn-360 is required for proper folding.</text>
</comment>
<comment type="similarity">
    <text evidence="5">Belongs to the hemocyanin family.</text>
</comment>
<name>ARY_ANTPE</name>
<proteinExistence type="evidence at protein level"/>
<dbReference type="EMBL" id="AY278025">
    <property type="protein sequence ID" value="AAP34685.1"/>
    <property type="molecule type" value="mRNA"/>
</dbReference>
<dbReference type="EMBL" id="EF597564">
    <property type="protein sequence ID" value="ABQ96634.1"/>
    <property type="molecule type" value="Genomic_DNA"/>
</dbReference>
<dbReference type="EMBL" id="D44483">
    <property type="protein sequence ID" value="BAA07926.1"/>
    <property type="molecule type" value="Genomic_DNA"/>
</dbReference>
<dbReference type="PDB" id="3GWJ">
    <property type="method" value="X-ray"/>
    <property type="resolution" value="2.43 A"/>
    <property type="chains" value="A/B/C/D/E/F=24-697"/>
</dbReference>
<dbReference type="PDBsum" id="3GWJ"/>
<dbReference type="SMR" id="Q7Z1F8"/>
<dbReference type="GlyConnect" id="60">
    <property type="glycosylation" value="10 N-Linked glycans"/>
</dbReference>
<dbReference type="iPTMnet" id="Q7Z1F8"/>
<dbReference type="EvolutionaryTrace" id="Q7Z1F8"/>
<dbReference type="GO" id="GO:0005576">
    <property type="term" value="C:extracellular region"/>
    <property type="evidence" value="ECO:0007669"/>
    <property type="project" value="UniProtKB-SubCell"/>
</dbReference>
<dbReference type="GO" id="GO:0045735">
    <property type="term" value="F:nutrient reservoir activity"/>
    <property type="evidence" value="ECO:0007669"/>
    <property type="project" value="UniProtKB-KW"/>
</dbReference>
<dbReference type="Gene3D" id="1.10.1280.10">
    <property type="entry name" value="Di-copper center containing domain from catechol oxidase"/>
    <property type="match status" value="1"/>
</dbReference>
<dbReference type="Gene3D" id="2.60.40.1520">
    <property type="entry name" value="Hemocyanin, C-terminal domain"/>
    <property type="match status" value="1"/>
</dbReference>
<dbReference type="Gene3D" id="1.20.1370.10">
    <property type="entry name" value="Hemocyanin, N-terminal domain"/>
    <property type="match status" value="1"/>
</dbReference>
<dbReference type="InterPro" id="IPR008922">
    <property type="entry name" value="Di-copper_centre_dom_sf"/>
</dbReference>
<dbReference type="InterPro" id="IPR013788">
    <property type="entry name" value="Hemocyanin/hexamerin"/>
</dbReference>
<dbReference type="InterPro" id="IPR000896">
    <property type="entry name" value="Hemocyanin/hexamerin_mid_dom"/>
</dbReference>
<dbReference type="InterPro" id="IPR005203">
    <property type="entry name" value="Hemocyanin_C"/>
</dbReference>
<dbReference type="InterPro" id="IPR037020">
    <property type="entry name" value="Hemocyanin_C_sf"/>
</dbReference>
<dbReference type="InterPro" id="IPR005204">
    <property type="entry name" value="Hemocyanin_N"/>
</dbReference>
<dbReference type="InterPro" id="IPR036697">
    <property type="entry name" value="Hemocyanin_N_sf"/>
</dbReference>
<dbReference type="InterPro" id="IPR014756">
    <property type="entry name" value="Ig_E-set"/>
</dbReference>
<dbReference type="PANTHER" id="PTHR11511:SF5">
    <property type="entry name" value="FAT-BODY PROTEIN 1-RELATED"/>
    <property type="match status" value="1"/>
</dbReference>
<dbReference type="PANTHER" id="PTHR11511">
    <property type="entry name" value="LARVAL STORAGE PROTEIN/PHENOLOXIDASE"/>
    <property type="match status" value="1"/>
</dbReference>
<dbReference type="Pfam" id="PF03723">
    <property type="entry name" value="Hemocyanin_C"/>
    <property type="match status" value="1"/>
</dbReference>
<dbReference type="Pfam" id="PF00372">
    <property type="entry name" value="Hemocyanin_M"/>
    <property type="match status" value="1"/>
</dbReference>
<dbReference type="Pfam" id="PF03722">
    <property type="entry name" value="Hemocyanin_N"/>
    <property type="match status" value="1"/>
</dbReference>
<dbReference type="PRINTS" id="PR00187">
    <property type="entry name" value="HAEMOCYANIN"/>
</dbReference>
<dbReference type="SUPFAM" id="SSF48056">
    <property type="entry name" value="Di-copper centre-containing domain"/>
    <property type="match status" value="1"/>
</dbReference>
<dbReference type="SUPFAM" id="SSF81296">
    <property type="entry name" value="E set domains"/>
    <property type="match status" value="1"/>
</dbReference>
<dbReference type="SUPFAM" id="SSF48050">
    <property type="entry name" value="Hemocyanin, N-terminal domain"/>
    <property type="match status" value="1"/>
</dbReference>
<dbReference type="PROSITE" id="PS00209">
    <property type="entry name" value="HEMOCYANIN_1"/>
    <property type="match status" value="1"/>
</dbReference>
<dbReference type="PROSITE" id="PS00210">
    <property type="entry name" value="HEMOCYANIN_2"/>
    <property type="match status" value="1"/>
</dbReference>
<evidence type="ECO:0000250" key="1"/>
<evidence type="ECO:0000255" key="2"/>
<evidence type="ECO:0000269" key="3">
    <source>
    </source>
</evidence>
<evidence type="ECO:0000269" key="4">
    <source ref="1"/>
</evidence>
<evidence type="ECO:0000305" key="5"/>
<evidence type="ECO:0007829" key="6">
    <source>
        <dbReference type="PDB" id="3GWJ"/>
    </source>
</evidence>
<protein>
    <recommendedName>
        <fullName>Arylphorin</fullName>
    </recommendedName>
</protein>
<reference key="1">
    <citation type="submission" date="2003-04" db="EMBL/GenBank/DDBJ databases">
        <title>Arylphorin of Antheraea pernyi.</title>
        <authorList>
            <person name="Cho O."/>
            <person name="Lee S.M."/>
            <person name="Park N.S."/>
            <person name="Jin B.R."/>
            <person name="Kim S."/>
        </authorList>
    </citation>
    <scope>NUCLEOTIDE SEQUENCE [MRNA]</scope>
    <scope>GLYCOSYLATION AT ASN-212 AND ASN-360</scope>
    <source>
        <tissue>Fat body</tissue>
    </source>
</reference>
<reference key="2">
    <citation type="submission" date="2007-05" db="EMBL/GenBank/DDBJ databases">
        <title>The research of Antheraea pernyi arylphorin precursor promoter.</title>
        <authorList>
            <person name="Zhang X.M."/>
            <person name="Liu N."/>
            <person name="Wei A.H."/>
            <person name="Cui S.S."/>
            <person name="Jiang S."/>
            <person name="Yan W.Q."/>
        </authorList>
    </citation>
    <scope>NUCLEOTIDE SEQUENCE [GENOMIC DNA]</scope>
</reference>
<reference key="3">
    <citation type="journal article" date="1995" name="Mol. Phylogenet. Evol.">
        <title>Phylogenetic relationship of silkmoths inferred from sequence data of the arylphorin gene.</title>
        <authorList>
            <person name="Shimada T."/>
            <person name="Kurimoto Y."/>
            <person name="Kobayashi M."/>
        </authorList>
    </citation>
    <scope>NUCLEOTIDE SEQUENCE [GENOMIC DNA] OF 251-371</scope>
    <source>
        <strain>Hotaka</strain>
        <tissue>Posterior silk gland</tissue>
    </source>
</reference>
<reference key="4">
    <citation type="journal article" date="2009" name="Biochem. J.">
        <title>The presence of monoglucosylated N196-glycan is important for the structural stability of storage protein, arylphorin.</title>
        <authorList>
            <person name="Ryu K.S."/>
            <person name="Lee J.O."/>
            <person name="Kwon T.H."/>
            <person name="Choi H.H."/>
            <person name="Park H.S."/>
            <person name="Hwang S.K."/>
            <person name="Lee Z.W."/>
            <person name="Lee K.B."/>
            <person name="Han Y.H."/>
            <person name="Choi Y.S."/>
            <person name="Jeon Y.H."/>
            <person name="Cheong C."/>
            <person name="Kim S."/>
        </authorList>
    </citation>
    <scope>X-RAY CRYSTALLOGRAPHY (2.43 ANGSTROMS) OF 24-697</scope>
    <scope>SUBUNIT</scope>
    <scope>GLYCOSYLATION AT ASN-212 AND ASN-360</scope>
    <scope>INTERCHAIN DISULFIDE BONDS</scope>
</reference>
<organism>
    <name type="scientific">Antheraea pernyi</name>
    <name type="common">Chinese oak silk moth</name>
    <name type="synonym">Bombyx pernyi</name>
    <dbReference type="NCBI Taxonomy" id="7119"/>
    <lineage>
        <taxon>Eukaryota</taxon>
        <taxon>Metazoa</taxon>
        <taxon>Ecdysozoa</taxon>
        <taxon>Arthropoda</taxon>
        <taxon>Hexapoda</taxon>
        <taxon>Insecta</taxon>
        <taxon>Pterygota</taxon>
        <taxon>Neoptera</taxon>
        <taxon>Endopterygota</taxon>
        <taxon>Lepidoptera</taxon>
        <taxon>Glossata</taxon>
        <taxon>Ditrysia</taxon>
        <taxon>Bombycoidea</taxon>
        <taxon>Saturniidae</taxon>
        <taxon>Saturniinae</taxon>
        <taxon>Saturniini</taxon>
        <taxon>Antheraea</taxon>
    </lineage>
</organism>
<accession>Q7Z1F8</accession>
<accession>A5YWM4</accession>
<accession>Q17065</accession>
<feature type="signal peptide" evidence="2">
    <location>
        <begin position="1"/>
        <end position="16"/>
    </location>
</feature>
<feature type="chain" id="PRO_0000013328" description="Arylphorin">
    <location>
        <begin position="17"/>
        <end position="704"/>
    </location>
</feature>
<feature type="glycosylation site" description="N-linked (GlcNAc...) asparagine" evidence="2">
    <location>
        <position position="73"/>
    </location>
</feature>
<feature type="glycosylation site" description="N-linked (GlcNAc...) asparagine" evidence="3 4">
    <location>
        <position position="212"/>
    </location>
</feature>
<feature type="glycosylation site" description="N-linked (GlcNAc...) asparagine" evidence="3 4">
    <location>
        <position position="360"/>
    </location>
</feature>
<feature type="disulfide bond" description="Interchain (with C-665)">
    <location>
        <position position="89"/>
    </location>
</feature>
<feature type="disulfide bond" description="Interchain (with C-89)">
    <location>
        <position position="665"/>
    </location>
</feature>
<feature type="sequence conflict" description="In Ref. 2; ABQ96634." evidence="5" ref="2">
    <original>I</original>
    <variation>T</variation>
    <location>
        <position position="3"/>
    </location>
</feature>
<feature type="sequence conflict" description="In Ref. 2; ABQ96634." evidence="5" ref="2">
    <original>D</original>
    <variation>E</variation>
    <location>
        <position position="82"/>
    </location>
</feature>
<feature type="sequence conflict" description="In Ref. 2; ABQ96634." evidence="5" ref="2">
    <original>W</original>
    <variation>R</variation>
    <location>
        <position position="548"/>
    </location>
</feature>
<feature type="sequence conflict" description="In Ref. 2; ABQ96634." evidence="5" ref="2">
    <original>D</original>
    <variation>E</variation>
    <location>
        <position position="555"/>
    </location>
</feature>
<feature type="strand" evidence="6">
    <location>
        <begin position="28"/>
        <end position="30"/>
    </location>
</feature>
<feature type="helix" evidence="6">
    <location>
        <begin position="33"/>
        <end position="44"/>
    </location>
</feature>
<feature type="helix" evidence="6">
    <location>
        <begin position="57"/>
        <end position="64"/>
    </location>
</feature>
<feature type="helix" evidence="6">
    <location>
        <begin position="68"/>
        <end position="73"/>
    </location>
</feature>
<feature type="helix" evidence="6">
    <location>
        <begin position="77"/>
        <end position="87"/>
    </location>
</feature>
<feature type="helix" evidence="6">
    <location>
        <begin position="103"/>
        <end position="117"/>
    </location>
</feature>
<feature type="strand" evidence="6">
    <location>
        <begin position="119"/>
        <end position="121"/>
    </location>
</feature>
<feature type="helix" evidence="6">
    <location>
        <begin position="122"/>
        <end position="135"/>
    </location>
</feature>
<feature type="helix" evidence="6">
    <location>
        <begin position="138"/>
        <end position="151"/>
    </location>
</feature>
<feature type="helix" evidence="6">
    <location>
        <begin position="153"/>
        <end position="155"/>
    </location>
</feature>
<feature type="helix" evidence="6">
    <location>
        <begin position="163"/>
        <end position="166"/>
    </location>
</feature>
<feature type="helix" evidence="6">
    <location>
        <begin position="168"/>
        <end position="170"/>
    </location>
</feature>
<feature type="helix" evidence="6">
    <location>
        <begin position="174"/>
        <end position="186"/>
    </location>
</feature>
<feature type="helix" evidence="6">
    <location>
        <begin position="192"/>
        <end position="195"/>
    </location>
</feature>
<feature type="helix" evidence="6">
    <location>
        <begin position="196"/>
        <end position="198"/>
    </location>
</feature>
<feature type="strand" evidence="6">
    <location>
        <begin position="200"/>
        <end position="203"/>
    </location>
</feature>
<feature type="strand" evidence="6">
    <location>
        <begin position="206"/>
        <end position="210"/>
    </location>
</feature>
<feature type="helix" evidence="6">
    <location>
        <begin position="214"/>
        <end position="216"/>
    </location>
</feature>
<feature type="helix" evidence="6">
    <location>
        <begin position="222"/>
        <end position="226"/>
    </location>
</feature>
<feature type="helix" evidence="6">
    <location>
        <begin position="227"/>
        <end position="230"/>
    </location>
</feature>
<feature type="helix" evidence="6">
    <location>
        <begin position="233"/>
        <end position="245"/>
    </location>
</feature>
<feature type="helix" evidence="6">
    <location>
        <begin position="253"/>
        <end position="256"/>
    </location>
</feature>
<feature type="helix" evidence="6">
    <location>
        <begin position="257"/>
        <end position="260"/>
    </location>
</feature>
<feature type="helix" evidence="6">
    <location>
        <begin position="262"/>
        <end position="283"/>
    </location>
</feature>
<feature type="strand" evidence="6">
    <location>
        <begin position="298"/>
        <end position="300"/>
    </location>
</feature>
<feature type="strand" evidence="6">
    <location>
        <begin position="309"/>
        <end position="312"/>
    </location>
</feature>
<feature type="helix" evidence="6">
    <location>
        <begin position="325"/>
        <end position="327"/>
    </location>
</feature>
<feature type="helix" evidence="6">
    <location>
        <begin position="328"/>
        <end position="347"/>
    </location>
</feature>
<feature type="helix" evidence="6">
    <location>
        <begin position="364"/>
        <end position="373"/>
    </location>
</feature>
<feature type="helix" evidence="6">
    <location>
        <begin position="376"/>
        <end position="378"/>
    </location>
</feature>
<feature type="strand" evidence="6">
    <location>
        <begin position="381"/>
        <end position="383"/>
    </location>
</feature>
<feature type="helix" evidence="6">
    <location>
        <begin position="391"/>
        <end position="400"/>
    </location>
</feature>
<feature type="helix" evidence="6">
    <location>
        <begin position="415"/>
        <end position="417"/>
    </location>
</feature>
<feature type="turn" evidence="6">
    <location>
        <begin position="419"/>
        <end position="421"/>
    </location>
</feature>
<feature type="helix" evidence="6">
    <location>
        <begin position="422"/>
        <end position="424"/>
    </location>
</feature>
<feature type="helix" evidence="6">
    <location>
        <begin position="426"/>
        <end position="442"/>
    </location>
</feature>
<feature type="helix" evidence="6">
    <location>
        <begin position="443"/>
        <end position="445"/>
    </location>
</feature>
<feature type="helix" evidence="6">
    <location>
        <begin position="451"/>
        <end position="454"/>
    </location>
</feature>
<feature type="strand" evidence="6">
    <location>
        <begin position="459"/>
        <end position="466"/>
    </location>
</feature>
<feature type="strand" evidence="6">
    <location>
        <begin position="469"/>
        <end position="479"/>
    </location>
</feature>
<feature type="helix" evidence="6">
    <location>
        <begin position="481"/>
        <end position="483"/>
    </location>
</feature>
<feature type="helix" evidence="6">
    <location>
        <begin position="490"/>
        <end position="492"/>
    </location>
</feature>
<feature type="strand" evidence="6">
    <location>
        <begin position="499"/>
        <end position="508"/>
    </location>
</feature>
<feature type="strand" evidence="6">
    <location>
        <begin position="512"/>
        <end position="521"/>
    </location>
</feature>
<feature type="strand" evidence="6">
    <location>
        <begin position="523"/>
        <end position="535"/>
    </location>
</feature>
<feature type="helix" evidence="6">
    <location>
        <begin position="544"/>
        <end position="547"/>
    </location>
</feature>
<feature type="helix" evidence="6">
    <location>
        <begin position="548"/>
        <end position="550"/>
    </location>
</feature>
<feature type="strand" evidence="6">
    <location>
        <begin position="552"/>
        <end position="561"/>
    </location>
</feature>
<feature type="strand" evidence="6">
    <location>
        <begin position="563"/>
        <end position="571"/>
    </location>
</feature>
<feature type="helix" evidence="6">
    <location>
        <begin position="572"/>
        <end position="574"/>
    </location>
</feature>
<feature type="helix" evidence="6">
    <location>
        <begin position="585"/>
        <end position="592"/>
    </location>
</feature>
<feature type="turn" evidence="6">
    <location>
        <begin position="593"/>
        <end position="595"/>
    </location>
</feature>
<feature type="strand" evidence="6">
    <location>
        <begin position="596"/>
        <end position="598"/>
    </location>
</feature>
<feature type="helix" evidence="6">
    <location>
        <begin position="599"/>
        <end position="603"/>
    </location>
</feature>
<feature type="strand" evidence="6">
    <location>
        <begin position="607"/>
        <end position="609"/>
    </location>
</feature>
<feature type="helix" evidence="6">
    <location>
        <begin position="610"/>
        <end position="612"/>
    </location>
</feature>
<feature type="strand" evidence="6">
    <location>
        <begin position="622"/>
        <end position="632"/>
    </location>
</feature>
<feature type="turn" evidence="6">
    <location>
        <begin position="641"/>
        <end position="643"/>
    </location>
</feature>
<feature type="strand" evidence="6">
    <location>
        <begin position="649"/>
        <end position="651"/>
    </location>
</feature>
<feature type="turn" evidence="6">
    <location>
        <begin position="653"/>
        <end position="656"/>
    </location>
</feature>
<feature type="strand" evidence="6">
    <location>
        <begin position="657"/>
        <end position="659"/>
    </location>
</feature>
<feature type="strand" evidence="6">
    <location>
        <begin position="671"/>
        <end position="680"/>
    </location>
</feature>
<feature type="helix" evidence="6">
    <location>
        <begin position="686"/>
        <end position="690"/>
    </location>
</feature>
<feature type="helix" evidence="6">
    <location>
        <begin position="692"/>
        <end position="695"/>
    </location>
</feature>
<sequence>MKIVLVLAGLIALVQSSVVHPPPHVLKTKDVDTVFVERQKKVLSLFQDVDQLNTNDEYYKIGKDYDIEANIDNYTNKKAVEDFLKMYRCGFLPKYNEFSVFHDKLRDEAIALFHLFYYAKDFDTFYKSAAFARVHLNQGQFLYAYYIAIIQRKDTYGIVLPAPYEIYPELFVNIDTTYKMFRTKMQNGLINPEAAVEYGIVKEDNHYVYYSNYSNAITYYNEEQRLAYFTEDIGLNAYYFFFHIHLPFWWTAEKYGNLKERRGEMYHYFYDQLLTRYYFERLTNGLGTIPEFSWYSPVKTGHYPLLTSYYTPFSQRPNFYNVHSEENYEKIRFLDAYENYFVQALQKGVFEGFGQTIYLNDSKANSFVGNYWQDNADLYGEEVTKDYQRSYEIVARQVLGAAPKPFDKYTFMPSALDFYQTSLRDPTFYQLYNRIIGYFNQFKQYLEPHSQEKLHFVGVKVNNVVVDKLVTFFEYYDFDATNTVFLTEEELKTKYPHNLKVRQPRLNHQPFNINIDIKADVATDAVVKIFMGPKYNENGFPITLENDWMKFFEMDWFTHKITPGQNTIVRNSNEFVIFKEDSLPSTELYKLLEKGKVPFDMSEDFGYLPKRLMLPRGTKGGFPFQFVVFVYPFESTTKNLTPYEKFMIDNKPLGYPFDRPVDTSCFKQPNIFFRDVSVYHEGEYHAYEYNVPAYFSHTNKVPKE</sequence>
<keyword id="KW-0002">3D-structure</keyword>
<keyword id="KW-1015">Disulfide bond</keyword>
<keyword id="KW-0325">Glycoprotein</keyword>
<keyword id="KW-0964">Secreted</keyword>
<keyword id="KW-0732">Signal</keyword>
<keyword id="KW-0758">Storage protein</keyword>